<name>AMPN_PLAF7</name>
<reference evidence="35" key="1">
    <citation type="journal article" date="1998" name="Mol. Biochem. Parasitol.">
        <title>A Plasmodium falciparum aminopeptidase gene belonging to the M1 family of zinc-metallopeptidases is expressed in erythrocytic stages.</title>
        <authorList>
            <person name="Florent I.C.P."/>
            <person name="Derhy Z."/>
            <person name="Allary M."/>
            <person name="Monsigny M."/>
            <person name="Mayer R."/>
            <person name="Schrevel J."/>
        </authorList>
    </citation>
    <scope>NUCLEOTIDE SEQUENCE [GENOMIC DNA]</scope>
    <scope>FUNCTION</scope>
    <scope>CATALYTIC ACTIVITY</scope>
    <scope>SUBCELLULAR LOCATION</scope>
    <scope>DEVELOPMENTAL STAGE</scope>
    <scope>PROTEOLYTIC CLEAVAGE</scope>
    <source>
        <strain evidence="35">FcB1 / Columbia</strain>
    </source>
</reference>
<reference evidence="39" key="2">
    <citation type="journal article" date="2002" name="Nature">
        <title>Genome sequence of the human malaria parasite Plasmodium falciparum.</title>
        <authorList>
            <person name="Gardner M.J."/>
            <person name="Hall N."/>
            <person name="Fung E."/>
            <person name="White O."/>
            <person name="Berriman M."/>
            <person name="Hyman R.W."/>
            <person name="Carlton J.M."/>
            <person name="Pain A."/>
            <person name="Nelson K.E."/>
            <person name="Bowman S."/>
            <person name="Paulsen I.T."/>
            <person name="James K.D."/>
            <person name="Eisen J.A."/>
            <person name="Rutherford K.M."/>
            <person name="Salzberg S.L."/>
            <person name="Craig A."/>
            <person name="Kyes S."/>
            <person name="Chan M.-S."/>
            <person name="Nene V."/>
            <person name="Shallom S.J."/>
            <person name="Suh B."/>
            <person name="Peterson J."/>
            <person name="Angiuoli S."/>
            <person name="Pertea M."/>
            <person name="Allen J."/>
            <person name="Selengut J."/>
            <person name="Haft D."/>
            <person name="Mather M.W."/>
            <person name="Vaidya A.B."/>
            <person name="Martin D.M.A."/>
            <person name="Fairlamb A.H."/>
            <person name="Fraunholz M.J."/>
            <person name="Roos D.S."/>
            <person name="Ralph S.A."/>
            <person name="McFadden G.I."/>
            <person name="Cummings L.M."/>
            <person name="Subramanian G.M."/>
            <person name="Mungall C."/>
            <person name="Venter J.C."/>
            <person name="Carucci D.J."/>
            <person name="Hoffman S.L."/>
            <person name="Newbold C."/>
            <person name="Davis R.W."/>
            <person name="Fraser C.M."/>
            <person name="Barrell B.G."/>
        </authorList>
    </citation>
    <scope>NUCLEOTIDE SEQUENCE [LARGE SCALE GENOMIC DNA]</scope>
    <source>
        <strain evidence="39">3D7</strain>
    </source>
</reference>
<reference evidence="39" key="3">
    <citation type="journal article" date="2002" name="Nature">
        <title>Sequence of Plasmodium falciparum chromosomes 1, 3-9 and 13.</title>
        <authorList>
            <person name="Hall N."/>
            <person name="Pain A."/>
            <person name="Berriman M."/>
            <person name="Churcher C.M."/>
            <person name="Harris B."/>
            <person name="Harris D."/>
            <person name="Mungall K.L."/>
            <person name="Bowman S."/>
            <person name="Atkin R."/>
            <person name="Baker S."/>
            <person name="Barron A."/>
            <person name="Brooks K."/>
            <person name="Buckee C.O."/>
            <person name="Burrows C."/>
            <person name="Cherevach I."/>
            <person name="Chillingworth C."/>
            <person name="Chillingworth T."/>
            <person name="Christodoulou Z."/>
            <person name="Clark L."/>
            <person name="Clark R."/>
            <person name="Corton C."/>
            <person name="Cronin A."/>
            <person name="Davies R.M."/>
            <person name="Davis P."/>
            <person name="Dear P."/>
            <person name="Dearden F."/>
            <person name="Doggett J."/>
            <person name="Feltwell T."/>
            <person name="Goble A."/>
            <person name="Goodhead I."/>
            <person name="Gwilliam R."/>
            <person name="Hamlin N."/>
            <person name="Hance Z."/>
            <person name="Harper D."/>
            <person name="Hauser H."/>
            <person name="Hornsby T."/>
            <person name="Holroyd S."/>
            <person name="Horrocks P."/>
            <person name="Humphray S."/>
            <person name="Jagels K."/>
            <person name="James K.D."/>
            <person name="Johnson D."/>
            <person name="Kerhornou A."/>
            <person name="Knights A."/>
            <person name="Konfortov B."/>
            <person name="Kyes S."/>
            <person name="Larke N."/>
            <person name="Lawson D."/>
            <person name="Lennard N."/>
            <person name="Line A."/>
            <person name="Maddison M."/>
            <person name="Mclean J."/>
            <person name="Mooney P."/>
            <person name="Moule S."/>
            <person name="Murphy L."/>
            <person name="Oliver K."/>
            <person name="Ormond D."/>
            <person name="Price C."/>
            <person name="Quail M.A."/>
            <person name="Rabbinowitsch E."/>
            <person name="Rajandream M.A."/>
            <person name="Rutter S."/>
            <person name="Rutherford K.M."/>
            <person name="Sanders M."/>
            <person name="Simmonds M."/>
            <person name="Seeger K."/>
            <person name="Sharp S."/>
            <person name="Smith R."/>
            <person name="Squares R."/>
            <person name="Squares S."/>
            <person name="Stevens K."/>
            <person name="Taylor K."/>
            <person name="Tivey A."/>
            <person name="Unwin L."/>
            <person name="Whitehead S."/>
            <person name="Woodward J.R."/>
            <person name="Sulston J.E."/>
            <person name="Craig A."/>
            <person name="Newbold C."/>
            <person name="Barrell B.G."/>
        </authorList>
    </citation>
    <scope>NUCLEOTIDE SEQUENCE [LARGE SCALE GENOMIC DNA]</scope>
    <source>
        <strain evidence="39">3D7</strain>
    </source>
</reference>
<reference key="4">
    <citation type="submission" date="2002-10" db="EMBL/GenBank/DDBJ databases">
        <authorList>
            <person name="Florent I.C.P."/>
        </authorList>
    </citation>
    <scope>SEQUENCE REVISION TO N-TERMINUS</scope>
</reference>
<reference key="5">
    <citation type="journal article" date="2002" name="Parasitology">
        <title>Properties, stage-dependent expression and localization of Plasmodium falciparum M1 family zinc-aminopeptidase.</title>
        <authorList>
            <person name="Allary M."/>
            <person name="Schrevel J."/>
            <person name="Florent I.C.P."/>
        </authorList>
    </citation>
    <scope>FUNCTION</scope>
    <scope>CATALYTIC ACTIVITY</scope>
    <scope>COFACTOR</scope>
    <scope>ACTIVITY REGULATION</scope>
    <scope>SUBCELLULAR LOCATION</scope>
    <scope>DEVELOPMENTAL STAGE</scope>
    <scope>PROTEOLYTIC CLEAVAGE</scope>
</reference>
<reference key="6">
    <citation type="journal article" date="2007" name="J. Biol. Chem.">
        <title>Roles for two aminopeptidases in vacuolar hemoglobin catabolism in Plasmodium falciparum.</title>
        <authorList>
            <person name="Dalal S."/>
            <person name="Klemba M."/>
        </authorList>
    </citation>
    <scope>CATALYTIC ACTIVITY</scope>
    <scope>SUBCELLULAR LOCATION</scope>
    <scope>DEVELOPMENTAL STAGE</scope>
</reference>
<reference key="7">
    <citation type="journal article" date="2010" name="Malar. J.">
        <title>Plasmodium falciparum PfA-M1 aminopeptidase is trafficked via the parasitophorous vacuole and marginally delivered to the food vacuole.</title>
        <authorList>
            <person name="Azimzadeh O."/>
            <person name="Sow C."/>
            <person name="Geze M."/>
            <person name="Nyalwidhe J."/>
            <person name="Florent I."/>
        </authorList>
    </citation>
    <scope>CATALYTIC ACTIVITY</scope>
    <scope>BIOPHYSICOCHEMICAL PROPERTIES</scope>
    <scope>SUBCELLULAR LOCATION</scope>
    <scope>DEVELOPMENTAL STAGE</scope>
    <scope>PROTEOLYTIC CLEAVAGE</scope>
    <source>
        <strain evidence="27">FcB1</strain>
        <strain evidence="27">FCBR</strain>
    </source>
</reference>
<reference key="8">
    <citation type="journal article" date="2011" name="J. Biol. Chem.">
        <title>Distribution and biochemical properties of an M1-family aminopeptidase in Plasmodium falciparum indicate a role in vacuolar hemoglobin catabolism.</title>
        <authorList>
            <person name="Ragheb D."/>
            <person name="Dalal S."/>
            <person name="Bompiani K.M."/>
            <person name="Ray W.K."/>
            <person name="Klemba M."/>
        </authorList>
    </citation>
    <scope>FUNCTION</scope>
    <scope>CATALYTIC ACTIVITY</scope>
    <scope>BIOPHYSICOCHEMICAL PROPERTIES</scope>
    <scope>ACTIVITY REGULATION</scope>
    <scope>SUBUNIT</scope>
    <scope>SUBCELLULAR LOCATION</scope>
    <scope>DEVELOPMENTAL STAGE</scope>
    <scope>IDENTIFICATION BY MASS SPECTROMETRY</scope>
    <scope>PROTEOLYTIC CLEAVAGE</scope>
</reference>
<reference key="9">
    <citation type="journal article" date="2012" name="PLoS ONE">
        <title>Fingerprinting the substrate specificity of M1 and M17 aminopeptidases of human malaria, Plasmodium falciparum.</title>
        <authorList>
            <person name="Poreba M."/>
            <person name="McGowan S."/>
            <person name="Skinner-Adams T.S."/>
            <person name="Trenholme K.R."/>
            <person name="Gardiner D.L."/>
            <person name="Whisstock J.C."/>
            <person name="To J."/>
            <person name="Salvesen G.S."/>
            <person name="Dalton J.P."/>
            <person name="Drag M."/>
        </authorList>
    </citation>
    <scope>FUNCTION</scope>
    <scope>CATALYTIC ACTIVITY</scope>
    <scope>BIOPHYSICOCHEMICAL PROPERTIES</scope>
</reference>
<reference key="10">
    <citation type="journal article" date="2021" name="Biochem. J.">
        <title>Mapping the substrate specificity of the Plasmodium M1 and M17 aminopeptidases.</title>
        <authorList>
            <person name="Malcolm T.R."/>
            <person name="Swiderska K.W."/>
            <person name="Hayes B.K."/>
            <person name="Webb C.T."/>
            <person name="Drag M."/>
            <person name="Drinkwater N."/>
            <person name="McGowan S."/>
        </authorList>
    </citation>
    <scope>FUNCTION</scope>
    <scope>CATALYTIC ACTIVITY</scope>
    <scope>ACTIVITY REGULATION</scope>
    <scope>BIOPHYSICOCHEMICAL PROPERTIES</scope>
</reference>
<reference key="11">
    <citation type="journal article" date="2021" name="Sci. Rep.">
        <title>Biochemical and cellular characterisation of the Plasmodium falciparum M1 alanyl aminopeptidase (PfM1AAP) and M17 leucyl aminopeptidase (PfM17LAP).</title>
        <authorList>
            <person name="Mathew R."/>
            <person name="Wunderlich J."/>
            <person name="Thivierge K."/>
            <person name="Cwiklinski K."/>
            <person name="Dumont C."/>
            <person name="Tilley L."/>
            <person name="Rohrbach P."/>
            <person name="Dalton J.P."/>
        </authorList>
    </citation>
    <scope>FUNCTION</scope>
    <scope>CATALYTIC ACTIVITY</scope>
    <scope>BIOPHYSICOCHEMICAL PROPERTIES</scope>
    <scope>SUBCELLULAR LOCATION</scope>
    <scope>DEVELOPMENTAL STAGE</scope>
    <scope>PROTEOLYTIC CLEAVAGE</scope>
</reference>
<reference evidence="40 41 42" key="12">
    <citation type="journal article" date="2009" name="Proc. Natl. Acad. Sci. U.S.A.">
        <title>Structural basis for the inhibition of the essential Plasmodium falciparum M1 neutral aminopeptidase.</title>
        <authorList>
            <person name="McGowan S."/>
            <person name="Porter C.J."/>
            <person name="Lowther J."/>
            <person name="Stack C.M."/>
            <person name="Golding S.J."/>
            <person name="Skinner-Adams T.S."/>
            <person name="Trenholme K.R."/>
            <person name="Teuscher F."/>
            <person name="Donnelly S.M."/>
            <person name="Grembecka J."/>
            <person name="Mucha A."/>
            <person name="Kafarski P."/>
            <person name="Degori R."/>
            <person name="Buckle A.M."/>
            <person name="Gardiner D.L."/>
            <person name="Whisstock J.C."/>
            <person name="Dalton J.P."/>
        </authorList>
    </citation>
    <scope>X-RAY CRYSTALLOGRAPHY (1.65 ANGSTROMS) OF 196-1084 IN COMPLEX WITH ZINC IONS AND BESTATIN</scope>
    <scope>FUNCTION</scope>
    <scope>CATALYTIC ACTIVITY</scope>
    <scope>COFACTOR</scope>
    <scope>ACTIVITY REGULATION</scope>
    <scope>BIOPHYSICOCHEMICAL PROPERTIES</scope>
    <scope>DEVELOPMENTAL STAGE</scope>
</reference>
<reference evidence="43 44" key="13">
    <citation type="journal article" date="2011" name="J. Med. Chem.">
        <title>Synthesis of new (-)-bestatin-based inhibitor libraries reveals a novel binding mode in the s1 pocket of the essential malaria m1 metalloaminopeptidase.</title>
        <authorList>
            <person name="Velmourougane G."/>
            <person name="Harbut M.B."/>
            <person name="Dalal S."/>
            <person name="McGowan S."/>
            <person name="Oellig C.A."/>
            <person name="Meinhardt N."/>
            <person name="Whisstock J.C."/>
            <person name="Klemba M."/>
            <person name="Greenbaum D.C."/>
        </authorList>
    </citation>
    <scope>X-RAY CRYSTALLOGRAPHY (1.8 ANGSTROMS) OF 195-1085 IN COMPLEX WITH ZINC IONS AND SUBSTRATE ANALOGS</scope>
    <scope>CATALYTIC ACTIVITY</scope>
    <scope>COFACTOR</scope>
</reference>
<reference evidence="45" key="14">
    <citation type="journal article" date="2011" name="Proc. Natl. Acad. Sci. U.S.A.">
        <title>Bestatin-based chemical biology strategy reveals distinct roles for malaria M1- and M17-family aminopeptidases.</title>
        <authorList>
            <person name="Harbut M.B."/>
            <person name="Velmourougane G."/>
            <person name="Dalal S."/>
            <person name="Reiss G."/>
            <person name="Whisstock J.C."/>
            <person name="Onder O."/>
            <person name="Brisson D."/>
            <person name="McGowan S."/>
            <person name="Klemba M."/>
            <person name="Greenbaum D.C."/>
        </authorList>
    </citation>
    <scope>X-RAY CRYSTALLOGRAPHY (1.80 ANGSTROMS) OF 196-1084 IN COMPLEX WITH ZINC AND INHIBITOR</scope>
    <scope>FUNCTION</scope>
    <scope>CATALYTIC ACTIVITY</scope>
    <scope>COFACTOR</scope>
    <scope>ACTIVITY REGULATION</scope>
</reference>
<reference evidence="46" key="15">
    <citation type="journal article" date="2013" name="J. Biol. Chem.">
        <title>A naturally variable residue in the S1 subsite of M1 family aminopeptidases modulates catalytic properties and promotes functional specialization.</title>
        <authorList>
            <person name="Dalal S."/>
            <person name="Ragheb D.R.T."/>
            <person name="Schubot F.D."/>
            <person name="Klemba M."/>
        </authorList>
    </citation>
    <scope>X-RAY CRYSTALLOGRAPHY (2.20 ANGSTROMS) OF 197-1085 AND MUTANT PRO-459 IN COMPLEX WITH ZINC AND ARGININE</scope>
    <scope>FUNCTION</scope>
    <scope>CATALYTIC ACTIVITY</scope>
    <scope>COFACTOR</scope>
    <scope>MUTAGENESIS OF VAL-459</scope>
</reference>
<reference evidence="47 48 49 50 51" key="16">
    <citation type="journal article" date="2013" name="J. Med. Chem.">
        <title>Synthesis and structure-activity relationships of phosphonic arginine mimetics as inhibitors of the M1 and M17 aminopeptidases from Plasmodium falciparum.</title>
        <authorList>
            <person name="Kannan Sivaraman K."/>
            <person name="Paiardini A."/>
            <person name="Sienczyk M."/>
            <person name="Ruggeri C."/>
            <person name="Oellig C.A."/>
            <person name="Dalton J.P."/>
            <person name="Scammells P.J."/>
            <person name="Drag M."/>
            <person name="McGowan S."/>
        </authorList>
    </citation>
    <scope>X-RAY CRYSTALLOGRAPHY (1.75 ANGSTROMS) OF 195-1085 IN COMPLEX WITH ZINC AND INHIBITOR</scope>
    <scope>CATALYTIC ACTIVITY</scope>
    <scope>COFACTOR</scope>
</reference>
<reference evidence="52 53 54" key="17">
    <citation type="journal article" date="2014" name="J. Med. Chem.">
        <title>Two-pronged attack: dual inhibition of Plasmodium falciparum M1 and M17 metalloaminopeptidases by a novel series of hydroxamic acid-based inhibitors.</title>
        <authorList>
            <person name="Mistry S.N."/>
            <person name="Drinkwater N."/>
            <person name="Ruggeri C."/>
            <person name="Sivaraman K.K."/>
            <person name="Loganathan S."/>
            <person name="Fletcher S."/>
            <person name="Drag M."/>
            <person name="Paiardini A."/>
            <person name="Avery V.M."/>
            <person name="Scammells P.J."/>
            <person name="McGowan S."/>
        </authorList>
    </citation>
    <scope>X-RAY CRYSTALLOGRAPHY (1.85 ANGSTROMS) OF 182-1084 IN COMPLEX WITH ZINC AND INHIBITORS</scope>
    <scope>CATALYTIC ACTIVITY</scope>
    <scope>COFACTOR</scope>
</reference>
<reference evidence="56" key="18">
    <citation type="journal article" date="2015" name="PLoS ONE">
        <title>Identification and Validation of a Potent Dual Inhibitor of the P. falciparum M1 and M17 Aminopeptidases Using Virtual Screening.</title>
        <authorList>
            <person name="Ruggeri C."/>
            <person name="Drinkwater N."/>
            <person name="Sivaraman K.K."/>
            <person name="Bamert R.S."/>
            <person name="McGowan S."/>
            <person name="Paiardini A."/>
        </authorList>
    </citation>
    <scope>X-RAY CRYSTALLOGRAPHY (1.98 ANGSTROMS) OF 196-1084 IN COMPLEX WITH ZINC</scope>
    <scope>CATALYTIC ACTIVITY</scope>
    <scope>COFACTOR</scope>
</reference>
<reference evidence="55" key="19">
    <citation type="journal article" date="2015" name="Proteins">
        <title>X-ray crystal structures of an orally available aminopeptidase inhibitor, Tosedostat, bound to anti-malarial drug targets PfA-M1 and PfA-M17.</title>
        <authorList>
            <person name="Drinkwater N."/>
            <person name="Bamert R.S."/>
            <person name="Sivaraman K.K."/>
            <person name="Paiardini A."/>
            <person name="McGowan S."/>
        </authorList>
    </citation>
    <scope>X-RAY CRYSTALLOGRAPHY (1.50 ANGSTROMS) OF 196-1084 IN COMPLEX WITH ZINC AND INHIBITOR</scope>
    <scope>CATALYTIC ACTIVITY</scope>
    <scope>COFACTOR</scope>
</reference>
<reference evidence="57 58 59 60 61 62 63 64 65" key="20">
    <citation type="journal article" date="2016" name="Eur. J. Med. Chem.">
        <title>Potent dual inhibitors of Plasmodium falciparum M1 and M17 aminopeptidases through optimization of S1 pocket interactions.</title>
        <authorList>
            <person name="Drinkwater N."/>
            <person name="Vinh N.B."/>
            <person name="Mistry S.N."/>
            <person name="Bamert R.S."/>
            <person name="Ruggeri C."/>
            <person name="Holleran J.P."/>
            <person name="Loganathan S."/>
            <person name="Paiardini A."/>
            <person name="Charman S.A."/>
            <person name="Powell A.K."/>
            <person name="Avery V.M."/>
            <person name="McGowan S."/>
            <person name="Scammells P.J."/>
        </authorList>
    </citation>
    <scope>X-RAY CRYSTALLOGRAPHY (1.80 ANGSTROMS) OF 195-1084 IN COMPLEX WITH ZINC</scope>
    <scope>CATALYTIC ACTIVITY</scope>
    <scope>COFACTOR</scope>
</reference>
<reference evidence="67 68 71 72 74 75 76 77" key="21">
    <citation type="submission" date="2017-07" db="PDB data bank">
        <title>Crystal structure of Plasmodium falciparum aminopeptidase N in complex with actinonin.</title>
        <authorList>
            <person name="Marapaka A.K."/>
            <person name="Addlagatta A."/>
        </authorList>
    </citation>
    <scope>X-RAY CRYSTALLOGRAPHY (1.55 ANGSTROMS) OF 195-1085 IN COMPLEX WITH ZINC AND INHIBITORS</scope>
    <scope>COFACTOR</scope>
</reference>
<reference evidence="78 79 80 81 82 83 84 85" key="22">
    <citation type="journal article" date="2019" name="J. Med. Chem.">
        <title>Hydroxamic Acid Inhibitors Provide Cross-Species Inhibition of Plasmodium M1 and M17 Aminopeptidases.</title>
        <authorList>
            <person name="Vinh N.B."/>
            <person name="Drinkwater N."/>
            <person name="Malcolm T.R."/>
            <person name="Kassiou M."/>
            <person name="Lucantoni L."/>
            <person name="Grin P.M."/>
            <person name="Butler G.S."/>
            <person name="Duffy S."/>
            <person name="Overall C.M."/>
            <person name="Avery V.M."/>
            <person name="Scammells P.J."/>
            <person name="McGowan S."/>
        </authorList>
    </citation>
    <scope>X-RAY CRYSTALLOGRAPHY (1.35 ANGSTROMS) OF 196-1084 IN COMPLEX WITH ZINC AND INHIBITORS</scope>
    <scope>CATALYTIC ACTIVITY</scope>
    <scope>COFACTOR</scope>
</reference>
<reference evidence="86 87" key="23">
    <citation type="journal article" date="2020" name="Bioorg. Chem.">
        <title>Aminobenzosuberone derivatives as PfA-M1 inhibitors: Molecular recognition and antiplasmodial evaluation.</title>
        <authorList>
            <person name="Salomon E."/>
            <person name="Schmitt M."/>
            <person name="Mouray E."/>
            <person name="McEwen A.G."/>
            <person name="Bounaadja L."/>
            <person name="Torchy M."/>
            <person name="Poussin-Courmontagne P."/>
            <person name="Alavi S."/>
            <person name="Tarnus C."/>
            <person name="Cavarelli J."/>
            <person name="Florent I."/>
            <person name="Albrecht S."/>
        </authorList>
    </citation>
    <scope>X-RAY CRYSTALLOGRAPHY (1.33 ANGSTROMS) OF 192-1085 IN COMPLEX WITH ZINC AND INHIBITORS</scope>
    <scope>CATALYTIC ACTIVITY</scope>
    <scope>COFACTOR</scope>
</reference>
<reference evidence="66 69 70 73" key="24">
    <citation type="journal article" date="2022" name="Chin. Chem. Lett.">
        <title>Development of peptidomimetic hydroxamates as PfA-M1 and PfA-M17 dual inhibitors: Biological evaluation and structural characterization by cocrystallization.</title>
        <authorList>
            <person name="Marapaka A.K."/>
            <person name="Sankoju P."/>
            <person name="Zhang G."/>
            <person name="Ding Y."/>
            <person name="Ma C."/>
            <person name="Pillalamarri V."/>
            <person name="Sudhakar P."/>
            <person name="Reddi B."/>
            <person name="Sijwali P.S."/>
            <person name="Zhang Y."/>
            <person name="Addlagatta A."/>
        </authorList>
    </citation>
    <scope>X-RAY CRYSTALLOGRAPHY (1.81 ANGSTROMS) OF 195-1085 IN COMPLEX WITH ZINC AND INHIBITORS</scope>
    <scope>CATALYTIC ACTIVITY</scope>
    <scope>COFACTOR</scope>
</reference>
<feature type="chain" id="PRO_0000095100" description="Aminopeptidase N">
    <location>
        <begin position="1"/>
        <end position="1085"/>
    </location>
</feature>
<feature type="signal peptide" description="Required for ER targeting and membrane association; not cleaved" evidence="6">
    <location>
        <begin position="1"/>
        <end position="30"/>
    </location>
</feature>
<feature type="chain" id="PRO_0000457921" description="p68 form" evidence="34">
    <location>
        <begin status="unknown"/>
        <end position="795"/>
    </location>
</feature>
<feature type="chain" id="PRO_0000457922" description="p35 form" evidence="34">
    <location>
        <begin position="796"/>
        <end position="1085"/>
    </location>
</feature>
<feature type="chain" id="PRO_0000457923" description="p120 form" evidence="31">
    <location>
        <begin status="unknown"/>
        <end position="1085"/>
    </location>
</feature>
<feature type="chain" id="PRO_0000457924" description="p96 form" evidence="31">
    <location>
        <begin status="unknown"/>
        <end position="1085"/>
    </location>
</feature>
<feature type="region of interest" description="Sufficient for targeting to the food vacuole" evidence="8">
    <location>
        <begin position="1"/>
        <end position="200"/>
    </location>
</feature>
<feature type="region of interest" description="Disordered" evidence="2">
    <location>
        <begin position="108"/>
        <end position="130"/>
    </location>
</feature>
<feature type="compositionally biased region" description="Low complexity" evidence="2">
    <location>
        <begin position="112"/>
        <end position="123"/>
    </location>
</feature>
<feature type="active site" description="Proton acceptor" evidence="1">
    <location>
        <position position="497"/>
    </location>
</feature>
<feature type="binding site" evidence="32 33 41 42 43">
    <location>
        <position position="319"/>
    </location>
    <ligand>
        <name>a peptide</name>
        <dbReference type="ChEBI" id="CHEBI:60466"/>
    </ligand>
</feature>
<feature type="binding site" evidence="32 33 41 42 43">
    <location>
        <position position="460"/>
    </location>
    <ligand>
        <name>a peptide</name>
        <dbReference type="ChEBI" id="CHEBI:60466"/>
    </ligand>
</feature>
<feature type="binding site" evidence="32 33 41 43">
    <location>
        <position position="461"/>
    </location>
    <ligand>
        <name>a peptide</name>
        <dbReference type="ChEBI" id="CHEBI:60466"/>
    </ligand>
</feature>
<feature type="binding site" evidence="32 33 41 42 43">
    <location>
        <position position="463"/>
    </location>
    <ligand>
        <name>a peptide</name>
        <dbReference type="ChEBI" id="CHEBI:60466"/>
    </ligand>
</feature>
<feature type="binding site" evidence="5 7 9 11 12 13 14 15 16 17 18 22 23 37 38 40 41 42 43 44 46 47 48 49 50 51 52 53 54 55 56 57 58 59 60 61 62 63 64 65 66 67 68 69 71 72 73 74 75 76 77 78 79 80 81 82 83 84 85 86 87">
    <location>
        <position position="496"/>
    </location>
    <ligand>
        <name>Zn(2+)</name>
        <dbReference type="ChEBI" id="CHEBI:29105"/>
        <note>catalytic</note>
    </ligand>
</feature>
<feature type="binding site" evidence="5 7 9 11 12 13 14 15 16 17 18 22 23 37 38 40 41 42 43 44 46 47 48 49 50 51 52 53 54 55 56 57 58 59 60 61 62 63 64 65 66 67 68 69 71 72 73 74 75 76 77 78 79 80 81 82 83 84 85 86 87">
    <location>
        <position position="500"/>
    </location>
    <ligand>
        <name>Zn(2+)</name>
        <dbReference type="ChEBI" id="CHEBI:29105"/>
        <note>catalytic</note>
    </ligand>
</feature>
<feature type="binding site" evidence="5 7 9 11 12 13 14 15 16 17 18 22 23 37 38 40 41 42 43 44 46 47 48 49 50 51 52 53 54 55 56 57 58 59 60 61 62 63 64 65 66 67 68 69 71 72 73 74 75 76 77 78 79 80 81 82 83 84 85 86 87">
    <location>
        <position position="519"/>
    </location>
    <ligand>
        <name>Zn(2+)</name>
        <dbReference type="ChEBI" id="CHEBI:29105"/>
        <note>catalytic</note>
    </ligand>
</feature>
<feature type="site" description="Important for substrate specificity" evidence="12">
    <location>
        <position position="459"/>
    </location>
</feature>
<feature type="site" description="Transition state stabilizer" evidence="1">
    <location>
        <position position="580"/>
    </location>
</feature>
<feature type="site" description="Cleavage" evidence="34">
    <location>
        <begin position="795"/>
        <end position="796"/>
    </location>
</feature>
<feature type="mutagenesis site" description="Severely affects substrate specificity. No effect on Zn(2+) binding." evidence="12">
    <original>V</original>
    <variation>P</variation>
    <location>
        <position position="459"/>
    </location>
</feature>
<feature type="helix" evidence="88">
    <location>
        <begin position="201"/>
        <end position="203"/>
    </location>
</feature>
<feature type="strand" evidence="88">
    <location>
        <begin position="208"/>
        <end position="220"/>
    </location>
</feature>
<feature type="strand" evidence="88">
    <location>
        <begin position="225"/>
        <end position="235"/>
    </location>
</feature>
<feature type="strand" evidence="88">
    <location>
        <begin position="244"/>
        <end position="247"/>
    </location>
</feature>
<feature type="strand" evidence="88">
    <location>
        <begin position="252"/>
        <end position="258"/>
    </location>
</feature>
<feature type="turn" evidence="88">
    <location>
        <begin position="266"/>
        <end position="268"/>
    </location>
</feature>
<feature type="strand" evidence="88">
    <location>
        <begin position="269"/>
        <end position="271"/>
    </location>
</feature>
<feature type="strand" evidence="88">
    <location>
        <begin position="273"/>
        <end position="278"/>
    </location>
</feature>
<feature type="helix" evidence="88">
    <location>
        <begin position="280"/>
        <end position="282"/>
    </location>
</feature>
<feature type="strand" evidence="88">
    <location>
        <begin position="285"/>
        <end position="296"/>
    </location>
</feature>
<feature type="helix" evidence="88">
    <location>
        <begin position="298"/>
        <end position="300"/>
    </location>
</feature>
<feature type="strand" evidence="88">
    <location>
        <begin position="305"/>
        <end position="310"/>
    </location>
</feature>
<feature type="strand" evidence="88">
    <location>
        <begin position="313"/>
        <end position="317"/>
    </location>
</feature>
<feature type="turn" evidence="88">
    <location>
        <begin position="319"/>
        <end position="322"/>
    </location>
</feature>
<feature type="helix" evidence="88">
    <location>
        <begin position="323"/>
        <end position="325"/>
    </location>
</feature>
<feature type="strand" evidence="88">
    <location>
        <begin position="337"/>
        <end position="346"/>
    </location>
</feature>
<feature type="turn" evidence="88">
    <location>
        <begin position="347"/>
        <end position="349"/>
    </location>
</feature>
<feature type="strand" evidence="88">
    <location>
        <begin position="352"/>
        <end position="365"/>
    </location>
</feature>
<feature type="turn" evidence="88">
    <location>
        <begin position="366"/>
        <end position="368"/>
    </location>
</feature>
<feature type="strand" evidence="88">
    <location>
        <begin position="369"/>
        <end position="380"/>
    </location>
</feature>
<feature type="helix" evidence="88">
    <location>
        <begin position="382"/>
        <end position="384"/>
    </location>
</feature>
<feature type="strand" evidence="88">
    <location>
        <begin position="387"/>
        <end position="390"/>
    </location>
</feature>
<feature type="strand" evidence="88">
    <location>
        <begin position="392"/>
        <end position="400"/>
    </location>
</feature>
<feature type="turn" evidence="88">
    <location>
        <begin position="402"/>
        <end position="404"/>
    </location>
</feature>
<feature type="strand" evidence="88">
    <location>
        <begin position="407"/>
        <end position="415"/>
    </location>
</feature>
<feature type="helix" evidence="88">
    <location>
        <begin position="416"/>
        <end position="421"/>
    </location>
</feature>
<feature type="helix" evidence="88">
    <location>
        <begin position="423"/>
        <end position="440"/>
    </location>
</feature>
<feature type="strand" evidence="88">
    <location>
        <begin position="446"/>
        <end position="455"/>
    </location>
</feature>
<feature type="strand" evidence="88">
    <location>
        <begin position="458"/>
        <end position="462"/>
    </location>
</feature>
<feature type="strand" evidence="88">
    <location>
        <begin position="467"/>
        <end position="471"/>
    </location>
</feature>
<feature type="helix" evidence="88">
    <location>
        <begin position="472"/>
        <end position="474"/>
    </location>
</feature>
<feature type="turn" evidence="88">
    <location>
        <begin position="479"/>
        <end position="481"/>
    </location>
</feature>
<feature type="helix" evidence="88">
    <location>
        <begin position="485"/>
        <end position="499"/>
    </location>
</feature>
<feature type="turn" evidence="88">
    <location>
        <begin position="500"/>
        <end position="502"/>
    </location>
</feature>
<feature type="turn" evidence="88">
    <location>
        <begin position="504"/>
        <end position="506"/>
    </location>
</feature>
<feature type="strand" evidence="88">
    <location>
        <begin position="507"/>
        <end position="511"/>
    </location>
</feature>
<feature type="helix" evidence="88">
    <location>
        <begin position="512"/>
        <end position="514"/>
    </location>
</feature>
<feature type="helix" evidence="88">
    <location>
        <begin position="515"/>
        <end position="534"/>
    </location>
</feature>
<feature type="helix" evidence="88">
    <location>
        <begin position="538"/>
        <end position="556"/>
    </location>
</feature>
<feature type="strand" evidence="88">
    <location>
        <begin position="566"/>
        <end position="570"/>
    </location>
</feature>
<feature type="helix" evidence="88">
    <location>
        <begin position="571"/>
        <end position="574"/>
    </location>
</feature>
<feature type="helix" evidence="88">
    <location>
        <begin position="577"/>
        <end position="609"/>
    </location>
</feature>
<feature type="turn" evidence="88">
    <location>
        <begin position="610"/>
        <end position="612"/>
    </location>
</feature>
<feature type="strand" evidence="88">
    <location>
        <begin position="613"/>
        <end position="615"/>
    </location>
</feature>
<feature type="helix" evidence="88">
    <location>
        <begin position="617"/>
        <end position="632"/>
    </location>
</feature>
<feature type="helix" evidence="88">
    <location>
        <begin position="641"/>
        <end position="643"/>
    </location>
</feature>
<feature type="helix" evidence="88">
    <location>
        <begin position="644"/>
        <end position="647"/>
    </location>
</feature>
<feature type="strand" evidence="88">
    <location>
        <begin position="653"/>
        <end position="661"/>
    </location>
</feature>
<feature type="turn" evidence="88">
    <location>
        <begin position="662"/>
        <end position="665"/>
    </location>
</feature>
<feature type="strand" evidence="88">
    <location>
        <begin position="666"/>
        <end position="674"/>
    </location>
</feature>
<feature type="strand" evidence="88">
    <location>
        <begin position="689"/>
        <end position="696"/>
    </location>
</feature>
<feature type="turn" evidence="88">
    <location>
        <begin position="698"/>
        <end position="700"/>
    </location>
</feature>
<feature type="strand" evidence="88">
    <location>
        <begin position="708"/>
        <end position="712"/>
    </location>
</feature>
<feature type="strand" evidence="88">
    <location>
        <begin position="714"/>
        <end position="722"/>
    </location>
</feature>
<feature type="strand" evidence="88">
    <location>
        <begin position="729"/>
        <end position="733"/>
    </location>
</feature>
<feature type="strand" evidence="88">
    <location>
        <begin position="738"/>
        <end position="743"/>
    </location>
</feature>
<feature type="helix" evidence="88">
    <location>
        <begin position="748"/>
        <end position="757"/>
    </location>
</feature>
<feature type="helix" evidence="88">
    <location>
        <begin position="761"/>
        <end position="788"/>
    </location>
</feature>
<feature type="helix" evidence="88">
    <location>
        <begin position="801"/>
        <end position="811"/>
    </location>
</feature>
<feature type="helix" evidence="88">
    <location>
        <begin position="818"/>
        <end position="824"/>
    </location>
</feature>
<feature type="helix" evidence="88">
    <location>
        <begin position="830"/>
        <end position="833"/>
    </location>
</feature>
<feature type="helix" evidence="88">
    <location>
        <begin position="834"/>
        <end position="836"/>
    </location>
</feature>
<feature type="strand" evidence="88">
    <location>
        <begin position="838"/>
        <end position="840"/>
    </location>
</feature>
<feature type="helix" evidence="88">
    <location>
        <begin position="842"/>
        <end position="870"/>
    </location>
</feature>
<feature type="helix" evidence="88">
    <location>
        <begin position="872"/>
        <end position="875"/>
    </location>
</feature>
<feature type="turn" evidence="88">
    <location>
        <begin position="879"/>
        <end position="882"/>
    </location>
</feature>
<feature type="helix" evidence="88">
    <location>
        <begin position="889"/>
        <end position="907"/>
    </location>
</feature>
<feature type="helix" evidence="88">
    <location>
        <begin position="913"/>
        <end position="920"/>
    </location>
</feature>
<feature type="helix" evidence="88">
    <location>
        <begin position="926"/>
        <end position="935"/>
    </location>
</feature>
<feature type="helix" evidence="88">
    <location>
        <begin position="936"/>
        <end position="938"/>
    </location>
</feature>
<feature type="helix" evidence="88">
    <location>
        <begin position="942"/>
        <end position="953"/>
    </location>
</feature>
<feature type="helix" evidence="88">
    <location>
        <begin position="957"/>
        <end position="968"/>
    </location>
</feature>
<feature type="helix" evidence="88">
    <location>
        <begin position="975"/>
        <end position="985"/>
    </location>
</feature>
<feature type="turn" evidence="88">
    <location>
        <begin position="986"/>
        <end position="989"/>
    </location>
</feature>
<feature type="helix" evidence="88">
    <location>
        <begin position="993"/>
        <end position="1000"/>
    </location>
</feature>
<feature type="helix" evidence="88">
    <location>
        <begin position="1003"/>
        <end position="1005"/>
    </location>
</feature>
<feature type="helix" evidence="88">
    <location>
        <begin position="1007"/>
        <end position="1010"/>
    </location>
</feature>
<feature type="helix" evidence="88">
    <location>
        <begin position="1016"/>
        <end position="1029"/>
    </location>
</feature>
<feature type="helix" evidence="88">
    <location>
        <begin position="1033"/>
        <end position="1038"/>
    </location>
</feature>
<feature type="helix" evidence="88">
    <location>
        <begin position="1039"/>
        <end position="1048"/>
    </location>
</feature>
<feature type="helix" evidence="88">
    <location>
        <begin position="1051"/>
        <end position="1065"/>
    </location>
</feature>
<feature type="helix" evidence="88">
    <location>
        <begin position="1072"/>
        <end position="1081"/>
    </location>
</feature>
<sequence>MKLTKGCAYKYIIFTVLILANILYDNKKRCMIKKNLRISSCGIISRLLKSNSNYNSFNKNYNFTSAISELQFSNFWNLDILQKDIFSNIHNNKNKPQSYIIHKRLMSEKGDNNNNNHQNNNGNDNKKRLGSVVNNEENTCSDKRMKPFEEGHGITQVDKMNNNSDHLQQNGVMNLNSNNVENNNNNNSVVVKKNEPKIHYRKDYKPSGFIINNVTLNINIHDNETIVRSVLDMDISKHNVGEDLVFDGVGLKINEISINNKKLVEGEEYTYDNEFLTIFSKFVPKSKFAFSSEVIIHPETNYALTGLYKSKNIIVSQCEATGFRRITFFIDRPDMMAKYDVTVTADKEKYPVLLSNGDKVNEFEIPGGRHGARFNDPHLKPCYLFAVVAGDLKHLSATYITKYTKKKVELYVFSEEKYVSKLQWALECLKKSMAFDEDYFGLEYDLSRLNLVAVSDFNVGAMENKGLNIFNANSLLASKKNSIDFSYARILTVVGHEYFHNYTGNRVTLRDWFQLTLKEGLTVHRENLFSEEMTKTVTTRLSHVDLLRSVQFLEDSSPLSHPIRPESYVSMENFYTTTVYDKGSEVMRMYLTILGEEYYKKGFDIYIKKNDGNTATCEDFNYAMEQAYKMKKADNSANLNQYLLWFSQSGTPHVSFKYNYDAEKKQYSIHVNQYTKPDENQKEKKPLFIPISVGLINPENGKEMISQTTLELTKESDTFVFNNIAVKPIPSLFRGFSAPVYIEDNLTDEERILLLKYDSDAFVRYNSCTNIYMKQILMNYNEFLKAKNEKLESFNLTPVNAQFIDAIKYLLEDPHADAGFKSYIVSLPQDRYIINFVSNLDTDVLADTKEYIYKQIGDKLNDVYYKMFKSLEAKADDLTYFNDESHVDFDQMNMRTLRNTLLSLLSKAQYPNILNEIIEHSKSPYPSNWLTSLSVSAYFDKYFELYDKTYKLSKDDELLLQEWLKTVSRSDRKDIYEILKKLENEVLKDSKNPNDIRAVYLPFTNNLRRFHDISGKGYKLIAEVITKTDKFNPMVATQLCEPFKLWNKLDTKRQELMLNEMNTMLQEPNISNNLKEYLLRLTNKL</sequence>
<proteinExistence type="evidence at protein level"/>
<comment type="function">
    <text evidence="3 5 8 9 10 12 19 20 21">Displays aminopeptidase activity with a broad substrate specificity (PubMed:12166515, PubMed:19196988, PubMed:21659511, PubMed:21844374, PubMed:22359643, PubMed:23897806, PubMed:33536500, PubMed:34133730, PubMed:9879894). Preferentially, cleaves after Leu and Met, but also cleaves after Ala and Arg (PubMed:12166515, PubMed:21844374, PubMed:22359643, PubMed:33536500). Low activity towards Lys, Phe, Tyr, Trp, Gln, Ser and Gly and negligible activity towards Glu, Asp, Pro, Ile, Thr, Val, His and Asn (PubMed:22359643). Has dipeptidase activity (PubMed:21659511, PubMed:23897806). Plays a role in the terminal stages of host hemoglobin digestion by cleaving the N-terminal residue of small hemoglobin-derived oligopeptides (PubMed:21659511, PubMed:21844374, PubMed:34133730).</text>
</comment>
<comment type="cofactor">
    <cofactor evidence="3 5 7">
        <name>Zn(2+)</name>
        <dbReference type="ChEBI" id="CHEBI:29105"/>
    </cofactor>
    <text evidence="3 5 7 9 11 12 13 14 15 16 17 18 22 23">Binds 1 zinc ion per subunit (PubMed:12166515, PubMed:19196988, PubMed:21366301, PubMed:21844374, PubMed:23713488, PubMed:23897806, PubMed:25299353, PubMed:25645579, PubMed:26406322, PubMed:26807544, PubMed:30537832, PubMed:32182520, Ref.21, Ref.24). Also, can use Mn(2+), Mg(2+) and Co(2+) with less efficiency (PubMed:12166515).</text>
</comment>
<comment type="activity regulation">
    <text evidence="3 5 8 9 20">Inhibited by 1,10-phenanthroline, EDTA and bestatin (PubMed:12166515, PubMed:19196988, PubMed:21659511, PubMed:34133730). Inhibited by (Benzyl)Tyr-Ala (BTA) (PubMed:21844374). Activity is not affected by phosphoramidin, PMSF, leupeptin, iodoacetamide or pepstatin (PubMed:12166515, PubMed:19196988).</text>
</comment>
<comment type="biophysicochemical properties">
    <molecule>p120 form</molecule>
    <kinetics>
        <KM evidence="8">110 uM for Arg-betaNA (at pH 7.5 and 27 degrees Celsius)</KM>
        <KM evidence="8">170 uM for Arg-betaNA (at pH 7.5 and 27 degrees Celsius, recombinant protein)</KM>
        <KM evidence="8">1100 uM for Arg-betaNA (at pH 5.5 and 27 degrees Celsius, recombinant protein)</KM>
        <KM evidence="8">210 uM for Ala-betaNA (at pH 7.5 and 27 degrees Celsius, recombinant protein)</KM>
        <KM evidence="8">4400 uM for Ala-betaNA (at pH 5.5 and 27 degrees Celsius, recombinant protein)</KM>
        <KM evidence="8">22 uM for Met-Phe (at pH 7.5 and 27 degrees Celsius, recombinant protein)</KM>
        <KM evidence="8">65 uM for Met-Phe (at pH 5.5 and 27 degrees Celsius, recombinant protein)</KM>
        <KM evidence="8">380 uM for Met-Phe (at pH 5 and 27 degrees Celsius, recombinant protein)</KM>
        <KM evidence="8">130 uM for Leu-Leu (at pH 7.5 and 27 degrees Celsius, recombinant protein)</KM>
        <KM evidence="8">410 uM for Leu-Leu (at pH 5.5 and 27 degrees Celsius, recombinant protein)</KM>
        <KM evidence="8">1200 uM for Leu-Leu (at pH 5 and 27 degrees Celsius, recombinant protein)</KM>
        <text evidence="8">kcat is 9.3 sec(-1) with for Arg-betaNA as substrate (at pH 7.5 and 37 degrees Celsius) (PubMed:21659511). kcat is 21 sec(-1) with for Arg-betaNA as substrate (at pH 7.5 and 37 degrees Celsius, recombinant protein) (PubMed:21659511). kcat is 9.4 sec(-1) with for Arg-betaNA as substrate (at pH 5.5 and 37 degrees Celsius, recombinant protein) (PubMed:21659511). kcat is 36 sec(-1) with for Ala-betaNA as substrate (at pH 7.5 and 37 degrees Celsius, recombinant protein) (PubMed:21659511). kcat is 16 sec(-1) with for Ala-betaNA as substrate (at pH 5.5 and 37 degrees Celsius, recombinant protein) (PubMed:21659511). kcat is 5.9 sec(-1) with for Met-Phe as substrate (at pH 7.5 and 37 degrees Celsius, recombinant protein) (PubMed:21659511). kcat is 7.5 sec(-1) with for Met-Phe as substrate (at pH 5.5 and 37 degrees Celsius, recombinant protein) (PubMed:21659511). kcat is 7.4 sec(-1) with for Met-Phe as substrate (at pH 5 and 37 degrees Celsius, recombinant protein) (PubMed:21659511). kcat is 12 sec(-1) with for Leu-Leu as substrate (at pH 7.5 and 37 degrees Celsius, recombinant protein) (PubMed:21659511). kcat is 7.9 sec(-1) with for Leu-Leu as substrate (at pH 5.5 and 37 degrees Celsius, recombinant protein) (PubMed:21659511). kcat is 1.4 sec(-1) with for Leu-Leu as substrate (at pH 5 and 37 degrees Celsius, recombinant protein) (PubMed:21659511).</text>
    </kinetics>
    <phDependence>
        <text evidence="8">Optimum pH is 7 (PubMed:21659511). Active between 5-8.5 (PubMed:21659511).</text>
    </phDependence>
</comment>
<comment type="biophysicochemical properties">
    <molecule>p68 form</molecule>
    <kinetics>
        <KM evidence="8">86 uM for Arg-betaNA (at pH 7.5 and 27 degrees Celsius)</KM>
        <text evidence="8">kcat is 11 sec(-1) with for Arg-betaNA as substrate (at pH 7.5 and 37 degrees Celsius).</text>
    </kinetics>
</comment>
<comment type="biophysicochemical properties">
    <kinetics>
        <KM evidence="19">197 uM for H-Ala-NHMec (at pH 7.5 and 37 degrees Celsius)</KM>
        <KM evidence="19">1276 uM for H-Ala-NHMec (at pH 5.2 and 37 degrees Celsius)</KM>
        <KM evidence="19">197 uM for H-Leu-NHMec (at pH 7.5 and 37 degrees Celsius)</KM>
        <KM evidence="19">1714 uM for H-Leu-NHMec (at pH 5.2 and 37 degrees Celsius)</KM>
        <KM evidence="19">308 uM for H-Arg-NHMec (at pH 7.5 and 37 degrees Celsius)</KM>
        <KM evidence="19">980 uM for H-Arg-NHMec (at pH 5.2 and 37 degrees Celsius)</KM>
        <KM evidence="10">240.6 uM for Ala-ACC (at pH 8, at 37 degrees Celsius and in the presence of Co(2+))</KM>
        <KM evidence="10">214.3 uM for Arg-ACC (at pH 8, at 37 degrees Celsius and in the presence of Co(2+))</KM>
        <KM evidence="10">140.9 uM for Leu-ACC (at pH 8, at 37 degrees Celsius and in the presence of Co(2+))</KM>
        <KM evidence="10">218 uM for Phe-ACC (at pH 8, at 37 degrees Celsius and in the presence of Co(2+))</KM>
        <KM evidence="10">138.2 uM for Met-ACC (at pH 8, at 37 degrees Celsius and in the presence of Co(2+))</KM>
        <KM evidence="10">144.4 uM for Trp-ACC (at pH 8, at 37 degrees Celsius and in the presence of Co(2+))</KM>
        <KM evidence="20">173 uM for Leu-Mec (at pH 8, at 37 degrees Celsius and in the presence of Co(2+))</KM>
        <text evidence="10 19 20">kcat is 0.9 sec(-1) with for H-Ala-NHMec as substrate (at pH 7.5 and 37 degrees Celsius) (PubMed:33536500). kcat is 0.4 sec(-1) with for H-Ala-NHMec as substrate (at pH 5.2 and 37 degrees Celsius) (PubMed:33536500). kcat is 0.8 sec(-1) with for H-Leu-NHMec as substrate (at pH 7.5 and 37 degrees Celsius) (PubMed:33536500). kcat is 0.7 sec(-1) with for H-Leu-NHMec as substrate (at pH 5.2 and 37 degrees Celsius) (PubMed:33536500). kcat is 0.7 sec(-1) with for H-Arg-NHMec as substrate (at pH 7.5 and 37 degrees Celsius) (PubMed:33536500). kcat is 0.4 sec(-1) with for H-Arg-NHMec as substrate (at pH 5.2 and 37 degrees Celsius) (PubMed:33536500). kcat is 1.054 sec(-1) with for Ala-ACC as substrate (at pH 8, at 37 degrees Celsius and in the presence of Co(2+)) (PubMed:22359643). kcat is 0.876 sec(-1) with for Arg-ACC as substrate (at pH 8, at 37 degrees Celsius and in the presence of Co(2+)) (PubMed:22359643). kcat is 0.868 sec(-1) with for Leu-ACC as substrate (at pH 8, at 37 degrees Celsius and in the presence of Co(2+)) (PubMed:22359643). kcat is 0.422 sec(-1) with for Phe-ACC as substrate (at pH 8, at 37 degrees Celsius and in the presence of Co(2+)) (PubMed:22359643). kcat is 0.887 sec(-1) with for Met-ACC as substrate (at pH 8, at 37 degrees Celsius and in the presence of Co(2+)) (PubMed:22359643). kcat is 0.444 sec(-1) with for Trp-ACC as substrate (at pH 8, at 37 degrees Celsius and in the presence of Co(2+)) (PubMed:22359643). kcat is 0.12 sec(-1) with for Leu-Mec as substrate (at pH 8, at 37 degrees Celsius and in the presence of Co(2+)) (PubMed:34133730).</text>
    </kinetics>
    <phDependence>
        <text evidence="5 6 19">Optimum pH is 7-7.5 (PubMed:19196988, PubMed:20591164, PubMed:33536500). Active from pH 5 to 9 (PubMed:19196988, PubMed:33536500). Has less than 20% of normal activity at pH 6.0 (PubMed:19196988).</text>
    </phDependence>
</comment>
<comment type="subunit">
    <text evidence="8">Heterodimer of the p68 form and the p35 form which are derived from the p120 precursor.</text>
</comment>
<comment type="subcellular location">
    <molecule>Aminopeptidase N</molecule>
    <subcellularLocation>
        <location evidence="6">Parasitophorous vacuole membrane</location>
        <topology evidence="31">Peripheral membrane protein</topology>
    </subcellularLocation>
    <text evidence="6">In trophozoites, partially localizes to the parasitophorous vacuole membrane.</text>
</comment>
<comment type="subcellular location">
    <molecule>p120 form</molecule>
    <subcellularLocation>
        <location evidence="8">Nucleus</location>
    </subcellularLocation>
</comment>
<comment type="subcellular location">
    <molecule>p96 form</molecule>
    <subcellularLocation>
        <location evidence="19">Cytoplasm</location>
    </subcellularLocation>
</comment>
<comment type="subcellular location">
    <molecule>p68 form</molecule>
    <subcellularLocation>
        <location evidence="19">Cytoplasm</location>
    </subcellularLocation>
    <subcellularLocation>
        <location evidence="4 6">Vacuole lumen</location>
    </subcellularLocation>
    <text evidence="6">In trophozoites, partially localizes to the digestive (or food) vacuole, an acidic vacuole where host hemoglobin is digested.</text>
</comment>
<comment type="subcellular location">
    <subcellularLocation>
        <location evidence="3 21">Cytoplasm</location>
    </subcellularLocation>
    <text evidence="3">In trophozoite and schizonts, localizes to the cytoplasm (PubMed:12166515). In trophozoites, also localizes around the digestive vacuole (PubMed:12166515). In schizonts, also localizes to discrete vesicle-like structures and in released merozoites localizes to a single discrete structure (PubMed:12166515). In ruptured schizonts, localizes around the digestive vacuole (PubMed:12166515).</text>
</comment>
<comment type="developmental stage">
    <molecule>Aminopeptidase N</molecule>
    <text evidence="3 4 5 6 19 21">Expressed during the asexual blood stage in late rings, trophozoites and schizonts (at protein level) (PubMed:12166515, PubMed:17895246, PubMed:19196988, PubMed:20591164, PubMed:33536500, PubMed:9879894). No expression at the early ring stage (at protein level) (PubMed:12166515, PubMed:20591164).</text>
</comment>
<comment type="developmental stage">
    <molecule>p96 form</molecule>
    <text evidence="6 21">Expressed at low levels during the asexual blood stage in trophozoites and early schizonts (at protein level) (PubMed:20591164, PubMed:9879894). No expression at the early ring stage and in mature segmented schizonts (at protein level) (PubMed:20591164).</text>
</comment>
<comment type="developmental stage">
    <molecule>p68 form</molecule>
    <text evidence="3 6 8 21">Expressed during the asexual blood stage in mature rings, trophozoites and schizonts (at protein level) (PubMed:12166515, PubMed:20591164, PubMed:21659511, PubMed:9879894). No expression at the early ring stage (at protein level) (PubMed:12166515, PubMed:20591164).</text>
</comment>
<comment type="PTM">
    <text evidence="3 6 8 19 21">The full length protein appears to be cleaved into a 120 kDa precursor. This precursor is then proteolytically cleaved at the N-terminus generating a 96 kDa form which is further processed at the C-terminus into 68 kDa and 35 kDa forms that remain associated.</text>
</comment>
<comment type="miscellaneous">
    <text evidence="8 34">May have an additional translation initiation (PubMed:21659511). Translation initiation at the first Met codon would generate a form that contains the signal peptide, enters the endomembrane system, and ultimately reaches the food vacuole (PubMed:21659511). Initiation of translation at an internal Met codon would result in a form that lacks the signal peptide, thereby re-directing the protein to the cytosol (Probable). A nuclear localization signal would then lead to nuclear import (Probable).</text>
</comment>
<comment type="similarity">
    <text evidence="31">Belongs to the peptidase M1 family.</text>
</comment>
<comment type="caution">
    <text evidence="3 8 19">The cytoplasm localization is controversial. One study showed that the protein localizes predominantly to the nucleus and the food vacuole (PubMed:21659511). Two studies showed that it localizes to the cytoplasm and the food vacuole (PubMed:12166515, PubMed:33536500). The discrepancy between studies is due to the staining procedure (PubMed:21659511).</text>
</comment>
<keyword id="KW-0002">3D-structure</keyword>
<keyword id="KW-0031">Aminopeptidase</keyword>
<keyword id="KW-0963">Cytoplasm</keyword>
<keyword id="KW-0224">Dipeptidase</keyword>
<keyword id="KW-0378">Hydrolase</keyword>
<keyword id="KW-0472">Membrane</keyword>
<keyword id="KW-0479">Metal-binding</keyword>
<keyword id="KW-0482">Metalloprotease</keyword>
<keyword id="KW-0539">Nucleus</keyword>
<keyword id="KW-0645">Protease</keyword>
<keyword id="KW-1185">Reference proteome</keyword>
<keyword id="KW-0732">Signal</keyword>
<keyword id="KW-0926">Vacuole</keyword>
<keyword id="KW-0862">Zinc</keyword>
<dbReference type="EC" id="3.4.11.-" evidence="3 4 6 8 10 20 21"/>
<dbReference type="EMBL" id="Y09081">
    <property type="protein sequence ID" value="CAA70301.2"/>
    <property type="molecule type" value="Genomic_DNA"/>
</dbReference>
<dbReference type="EMBL" id="AL844509">
    <property type="protein sequence ID" value="CAD52253.1"/>
    <property type="molecule type" value="Genomic_DNA"/>
</dbReference>
<dbReference type="PIR" id="T28636">
    <property type="entry name" value="T28636"/>
</dbReference>
<dbReference type="RefSeq" id="XP_001349846.1">
    <property type="nucleotide sequence ID" value="XM_001349810.1"/>
</dbReference>
<dbReference type="PDB" id="3EBG">
    <property type="method" value="X-ray"/>
    <property type="resolution" value="2.10 A"/>
    <property type="chains" value="A=196-1084"/>
</dbReference>
<dbReference type="PDB" id="3EBH">
    <property type="method" value="X-ray"/>
    <property type="resolution" value="1.65 A"/>
    <property type="chains" value="A=196-1084"/>
</dbReference>
<dbReference type="PDB" id="3EBI">
    <property type="method" value="X-ray"/>
    <property type="resolution" value="2.00 A"/>
    <property type="chains" value="A=195-1084"/>
</dbReference>
<dbReference type="PDB" id="3Q43">
    <property type="method" value="X-ray"/>
    <property type="resolution" value="1.80 A"/>
    <property type="chains" value="A=195-1085"/>
</dbReference>
<dbReference type="PDB" id="3Q44">
    <property type="method" value="X-ray"/>
    <property type="resolution" value="1.80 A"/>
    <property type="chains" value="A=195-1085"/>
</dbReference>
<dbReference type="PDB" id="3T8V">
    <property type="method" value="X-ray"/>
    <property type="resolution" value="1.80 A"/>
    <property type="chains" value="A=196-1084"/>
</dbReference>
<dbReference type="PDB" id="4J3B">
    <property type="method" value="X-ray"/>
    <property type="resolution" value="2.20 A"/>
    <property type="chains" value="A=197-1085"/>
</dbReference>
<dbReference type="PDB" id="4K5L">
    <property type="method" value="X-ray"/>
    <property type="resolution" value="1.91 A"/>
    <property type="chains" value="A=195-1085"/>
</dbReference>
<dbReference type="PDB" id="4K5M">
    <property type="method" value="X-ray"/>
    <property type="resolution" value="1.75 A"/>
    <property type="chains" value="A=195-1085"/>
</dbReference>
<dbReference type="PDB" id="4K5N">
    <property type="method" value="X-ray"/>
    <property type="resolution" value="1.91 A"/>
    <property type="chains" value="A=196-1084"/>
</dbReference>
<dbReference type="PDB" id="4K5O">
    <property type="method" value="X-ray"/>
    <property type="resolution" value="1.90 A"/>
    <property type="chains" value="A=196-1084"/>
</dbReference>
<dbReference type="PDB" id="4K5P">
    <property type="method" value="X-ray"/>
    <property type="resolution" value="1.85 A"/>
    <property type="chains" value="A=196-1084"/>
</dbReference>
<dbReference type="PDB" id="4R5T">
    <property type="method" value="X-ray"/>
    <property type="resolution" value="1.98 A"/>
    <property type="chains" value="A=196-1084"/>
</dbReference>
<dbReference type="PDB" id="4R5V">
    <property type="method" value="X-ray"/>
    <property type="resolution" value="2.10 A"/>
    <property type="chains" value="A=196-1084"/>
</dbReference>
<dbReference type="PDB" id="4R5X">
    <property type="method" value="X-ray"/>
    <property type="resolution" value="1.85 A"/>
    <property type="chains" value="A=182-1084"/>
</dbReference>
<dbReference type="PDB" id="4X2U">
    <property type="method" value="X-ray"/>
    <property type="resolution" value="1.60 A"/>
    <property type="chains" value="A=196-1084"/>
</dbReference>
<dbReference type="PDB" id="4ZQT">
    <property type="method" value="X-ray"/>
    <property type="resolution" value="1.98 A"/>
    <property type="chains" value="A=196-1084"/>
</dbReference>
<dbReference type="PDB" id="4ZW3">
    <property type="method" value="X-ray"/>
    <property type="resolution" value="1.80 A"/>
    <property type="chains" value="A=195-1084"/>
</dbReference>
<dbReference type="PDB" id="4ZW5">
    <property type="method" value="X-ray"/>
    <property type="resolution" value="1.80 A"/>
    <property type="chains" value="A=195-1084"/>
</dbReference>
<dbReference type="PDB" id="4ZW6">
    <property type="method" value="X-ray"/>
    <property type="resolution" value="1.90 A"/>
    <property type="chains" value="A=195-1084"/>
</dbReference>
<dbReference type="PDB" id="4ZW7">
    <property type="method" value="X-ray"/>
    <property type="resolution" value="1.95 A"/>
    <property type="chains" value="A=195-1084"/>
</dbReference>
<dbReference type="PDB" id="4ZW8">
    <property type="method" value="X-ray"/>
    <property type="resolution" value="2.00 A"/>
    <property type="chains" value="A=195-1084"/>
</dbReference>
<dbReference type="PDB" id="4ZX3">
    <property type="method" value="X-ray"/>
    <property type="resolution" value="2.00 A"/>
    <property type="chains" value="A=195-1084"/>
</dbReference>
<dbReference type="PDB" id="4ZX4">
    <property type="method" value="X-ray"/>
    <property type="resolution" value="1.90 A"/>
    <property type="chains" value="A=195-1084"/>
</dbReference>
<dbReference type="PDB" id="4ZX5">
    <property type="method" value="X-ray"/>
    <property type="resolution" value="1.95 A"/>
    <property type="chains" value="A=195-1084"/>
</dbReference>
<dbReference type="PDB" id="4ZX6">
    <property type="method" value="X-ray"/>
    <property type="resolution" value="2.05 A"/>
    <property type="chains" value="A=195-1084"/>
</dbReference>
<dbReference type="PDB" id="5XM7">
    <property type="method" value="X-ray"/>
    <property type="resolution" value="1.96 A"/>
    <property type="chains" value="A=195-1085"/>
</dbReference>
<dbReference type="PDB" id="5Y19">
    <property type="method" value="X-ray"/>
    <property type="resolution" value="1.83 A"/>
    <property type="chains" value="A=195-1085"/>
</dbReference>
<dbReference type="PDB" id="5Y1H">
    <property type="method" value="X-ray"/>
    <property type="resolution" value="1.73 A"/>
    <property type="chains" value="A=195-1085"/>
</dbReference>
<dbReference type="PDB" id="5Y1K">
    <property type="method" value="X-ray"/>
    <property type="resolution" value="1.81 A"/>
    <property type="chains" value="A=195-1085"/>
</dbReference>
<dbReference type="PDB" id="5Y1Q">
    <property type="method" value="X-ray"/>
    <property type="resolution" value="2.14 A"/>
    <property type="chains" value="A=195-1085"/>
</dbReference>
<dbReference type="PDB" id="5Y1R">
    <property type="method" value="X-ray"/>
    <property type="resolution" value="1.69 A"/>
    <property type="chains" value="A=195-1085"/>
</dbReference>
<dbReference type="PDB" id="5Y1S">
    <property type="method" value="X-ray"/>
    <property type="resolution" value="1.66 A"/>
    <property type="chains" value="A=195-1085"/>
</dbReference>
<dbReference type="PDB" id="5Y1T">
    <property type="method" value="X-ray"/>
    <property type="resolution" value="2.14 A"/>
    <property type="chains" value="A=195-1085"/>
</dbReference>
<dbReference type="PDB" id="5Y1V">
    <property type="method" value="X-ray"/>
    <property type="resolution" value="1.62 A"/>
    <property type="chains" value="A=195-1085"/>
</dbReference>
<dbReference type="PDB" id="5Y1W">
    <property type="method" value="X-ray"/>
    <property type="resolution" value="1.56 A"/>
    <property type="chains" value="A=195-1085"/>
</dbReference>
<dbReference type="PDB" id="5Y1X">
    <property type="method" value="X-ray"/>
    <property type="resolution" value="1.55 A"/>
    <property type="chains" value="A=195-1085"/>
</dbReference>
<dbReference type="PDB" id="5Y3I">
    <property type="method" value="X-ray"/>
    <property type="resolution" value="1.73 A"/>
    <property type="chains" value="A=195-1085"/>
</dbReference>
<dbReference type="PDB" id="6EA1">
    <property type="method" value="X-ray"/>
    <property type="resolution" value="1.81 A"/>
    <property type="chains" value="A=196-1084"/>
</dbReference>
<dbReference type="PDB" id="6EA2">
    <property type="method" value="X-ray"/>
    <property type="resolution" value="1.35 A"/>
    <property type="chains" value="A=196-1084"/>
</dbReference>
<dbReference type="PDB" id="6EAA">
    <property type="method" value="X-ray"/>
    <property type="resolution" value="1.65 A"/>
    <property type="chains" value="A=196-1084"/>
</dbReference>
<dbReference type="PDB" id="6EAB">
    <property type="method" value="X-ray"/>
    <property type="resolution" value="1.85 A"/>
    <property type="chains" value="A=196-1084"/>
</dbReference>
<dbReference type="PDB" id="6EE3">
    <property type="method" value="X-ray"/>
    <property type="resolution" value="1.82 A"/>
    <property type="chains" value="A=196-1084"/>
</dbReference>
<dbReference type="PDB" id="6EE4">
    <property type="method" value="X-ray"/>
    <property type="resolution" value="1.58 A"/>
    <property type="chains" value="A=196-1084"/>
</dbReference>
<dbReference type="PDB" id="6EE6">
    <property type="method" value="X-ray"/>
    <property type="resolution" value="1.50 A"/>
    <property type="chains" value="A=196-1084"/>
</dbReference>
<dbReference type="PDB" id="6EED">
    <property type="method" value="X-ray"/>
    <property type="resolution" value="1.50 A"/>
    <property type="chains" value="A=196-1084"/>
</dbReference>
<dbReference type="PDB" id="6SBQ">
    <property type="method" value="X-ray"/>
    <property type="resolution" value="1.33 A"/>
    <property type="chains" value="A=192-1085"/>
</dbReference>
<dbReference type="PDB" id="6SBR">
    <property type="method" value="X-ray"/>
    <property type="resolution" value="1.54 A"/>
    <property type="chains" value="A=192-1085"/>
</dbReference>
<dbReference type="PDB" id="8EWZ">
    <property type="method" value="X-ray"/>
    <property type="resolution" value="1.75 A"/>
    <property type="chains" value="A=195-1085"/>
</dbReference>
<dbReference type="PDB" id="8EX3">
    <property type="method" value="X-ray"/>
    <property type="resolution" value="1.60 A"/>
    <property type="chains" value="A=195-1085"/>
</dbReference>
<dbReference type="PDB" id="8EYD">
    <property type="method" value="X-ray"/>
    <property type="resolution" value="1.83 A"/>
    <property type="chains" value="A=195-1085"/>
</dbReference>
<dbReference type="PDB" id="8EYE">
    <property type="method" value="X-ray"/>
    <property type="resolution" value="1.83 A"/>
    <property type="chains" value="A=195-1085"/>
</dbReference>
<dbReference type="PDB" id="8EYF">
    <property type="method" value="X-ray"/>
    <property type="resolution" value="1.90 A"/>
    <property type="chains" value="A=195-1085"/>
</dbReference>
<dbReference type="PDB" id="8EZ2">
    <property type="method" value="X-ray"/>
    <property type="resolution" value="1.83 A"/>
    <property type="chains" value="A=195-1085"/>
</dbReference>
<dbReference type="PDB" id="8SLO">
    <property type="method" value="X-ray"/>
    <property type="resolution" value="1.55 A"/>
    <property type="chains" value="A=1-1085"/>
</dbReference>
<dbReference type="PDB" id="8SVL">
    <property type="method" value="X-ray"/>
    <property type="resolution" value="1.50 A"/>
    <property type="chains" value="A=1-1085"/>
</dbReference>
<dbReference type="PDB" id="8T6H">
    <property type="method" value="X-ray"/>
    <property type="resolution" value="1.98 A"/>
    <property type="chains" value="A=195-1085"/>
</dbReference>
<dbReference type="PDB" id="8T7P">
    <property type="method" value="X-ray"/>
    <property type="resolution" value="2.00 A"/>
    <property type="chains" value="A=195-1085"/>
</dbReference>
<dbReference type="PDB" id="8T83">
    <property type="method" value="X-ray"/>
    <property type="resolution" value="2.00 A"/>
    <property type="chains" value="A=195-1085"/>
</dbReference>
<dbReference type="PDBsum" id="3EBG"/>
<dbReference type="PDBsum" id="3EBH"/>
<dbReference type="PDBsum" id="3EBI"/>
<dbReference type="PDBsum" id="3Q43"/>
<dbReference type="PDBsum" id="3Q44"/>
<dbReference type="PDBsum" id="3T8V"/>
<dbReference type="PDBsum" id="4J3B"/>
<dbReference type="PDBsum" id="4K5L"/>
<dbReference type="PDBsum" id="4K5M"/>
<dbReference type="PDBsum" id="4K5N"/>
<dbReference type="PDBsum" id="4K5O"/>
<dbReference type="PDBsum" id="4K5P"/>
<dbReference type="PDBsum" id="4R5T"/>
<dbReference type="PDBsum" id="4R5V"/>
<dbReference type="PDBsum" id="4R5X"/>
<dbReference type="PDBsum" id="4X2U"/>
<dbReference type="PDBsum" id="4ZQT"/>
<dbReference type="PDBsum" id="4ZW3"/>
<dbReference type="PDBsum" id="4ZW5"/>
<dbReference type="PDBsum" id="4ZW6"/>
<dbReference type="PDBsum" id="4ZW7"/>
<dbReference type="PDBsum" id="4ZW8"/>
<dbReference type="PDBsum" id="4ZX3"/>
<dbReference type="PDBsum" id="4ZX4"/>
<dbReference type="PDBsum" id="4ZX5"/>
<dbReference type="PDBsum" id="4ZX6"/>
<dbReference type="PDBsum" id="5XM7"/>
<dbReference type="PDBsum" id="5Y19"/>
<dbReference type="PDBsum" id="5Y1H"/>
<dbReference type="PDBsum" id="5Y1K"/>
<dbReference type="PDBsum" id="5Y1Q"/>
<dbReference type="PDBsum" id="5Y1R"/>
<dbReference type="PDBsum" id="5Y1S"/>
<dbReference type="PDBsum" id="5Y1T"/>
<dbReference type="PDBsum" id="5Y1V"/>
<dbReference type="PDBsum" id="5Y1W"/>
<dbReference type="PDBsum" id="5Y1X"/>
<dbReference type="PDBsum" id="5Y3I"/>
<dbReference type="PDBsum" id="6EA1"/>
<dbReference type="PDBsum" id="6EA2"/>
<dbReference type="PDBsum" id="6EAA"/>
<dbReference type="PDBsum" id="6EAB"/>
<dbReference type="PDBsum" id="6EE3"/>
<dbReference type="PDBsum" id="6EE4"/>
<dbReference type="PDBsum" id="6EE6"/>
<dbReference type="PDBsum" id="6EED"/>
<dbReference type="PDBsum" id="6SBQ"/>
<dbReference type="PDBsum" id="6SBR"/>
<dbReference type="PDBsum" id="8EWZ"/>
<dbReference type="PDBsum" id="8EX3"/>
<dbReference type="PDBsum" id="8EYD"/>
<dbReference type="PDBsum" id="8EYE"/>
<dbReference type="PDBsum" id="8EYF"/>
<dbReference type="PDBsum" id="8EZ2"/>
<dbReference type="PDBsum" id="8SLO"/>
<dbReference type="PDBsum" id="8SVL"/>
<dbReference type="PDBsum" id="8T6H"/>
<dbReference type="PDBsum" id="8T7P"/>
<dbReference type="PDBsum" id="8T83"/>
<dbReference type="SMR" id="O96935"/>
<dbReference type="IntAct" id="O96935">
    <property type="interactions" value="3"/>
</dbReference>
<dbReference type="STRING" id="36329.Q8IEK1"/>
<dbReference type="BindingDB" id="O96935"/>
<dbReference type="ChEMBL" id="CHEMBL4117"/>
<dbReference type="DrugCentral" id="O96935"/>
<dbReference type="MEROPS" id="M01.029"/>
<dbReference type="PaxDb" id="5833-MAL13P1.56"/>
<dbReference type="EnsemblProtists" id="CAD52253">
    <property type="protein sequence ID" value="CAD52253"/>
    <property type="gene ID" value="PF3D7_1311800"/>
</dbReference>
<dbReference type="GeneID" id="813945"/>
<dbReference type="KEGG" id="pfa:PF3D7_1311800"/>
<dbReference type="VEuPathDB" id="PlasmoDB:PF3D7_1311800"/>
<dbReference type="HOGENOM" id="CLU_007993_2_0_1"/>
<dbReference type="OMA" id="FKRWYSQ"/>
<dbReference type="OrthoDB" id="10031169at2759"/>
<dbReference type="BRENDA" id="3.4.11.20">
    <property type="organism ID" value="4889"/>
</dbReference>
<dbReference type="EvolutionaryTrace" id="O96935"/>
<dbReference type="PHI-base" id="PHI:12132"/>
<dbReference type="Proteomes" id="UP000001450">
    <property type="component" value="Chromosome 13"/>
</dbReference>
<dbReference type="GO" id="GO:0005737">
    <property type="term" value="C:cytoplasm"/>
    <property type="evidence" value="ECO:0000314"/>
    <property type="project" value="UniProtKB"/>
</dbReference>
<dbReference type="GO" id="GO:0020020">
    <property type="term" value="C:food vacuole"/>
    <property type="evidence" value="ECO:0000314"/>
    <property type="project" value="UniProtKB"/>
</dbReference>
<dbReference type="GO" id="GO:0016020">
    <property type="term" value="C:membrane"/>
    <property type="evidence" value="ECO:0007669"/>
    <property type="project" value="UniProtKB-KW"/>
</dbReference>
<dbReference type="GO" id="GO:0005634">
    <property type="term" value="C:nucleus"/>
    <property type="evidence" value="ECO:0007669"/>
    <property type="project" value="UniProtKB-SubCell"/>
</dbReference>
<dbReference type="GO" id="GO:0020005">
    <property type="term" value="C:symbiont-containing vacuole membrane"/>
    <property type="evidence" value="ECO:0007669"/>
    <property type="project" value="UniProtKB-SubCell"/>
</dbReference>
<dbReference type="GO" id="GO:0005775">
    <property type="term" value="C:vacuolar lumen"/>
    <property type="evidence" value="ECO:0007669"/>
    <property type="project" value="UniProtKB-SubCell"/>
</dbReference>
<dbReference type="GO" id="GO:0004177">
    <property type="term" value="F:aminopeptidase activity"/>
    <property type="evidence" value="ECO:0000314"/>
    <property type="project" value="UniProtKB"/>
</dbReference>
<dbReference type="GO" id="GO:0016805">
    <property type="term" value="F:dipeptidase activity"/>
    <property type="evidence" value="ECO:0007669"/>
    <property type="project" value="UniProtKB-KW"/>
</dbReference>
<dbReference type="GO" id="GO:0070006">
    <property type="term" value="F:metalloaminopeptidase activity"/>
    <property type="evidence" value="ECO:0000314"/>
    <property type="project" value="UniProtKB"/>
</dbReference>
<dbReference type="GO" id="GO:0008270">
    <property type="term" value="F:zinc ion binding"/>
    <property type="evidence" value="ECO:0007669"/>
    <property type="project" value="InterPro"/>
</dbReference>
<dbReference type="GO" id="GO:0006508">
    <property type="term" value="P:proteolysis"/>
    <property type="evidence" value="ECO:0000314"/>
    <property type="project" value="UniProtKB"/>
</dbReference>
<dbReference type="CDD" id="cd09600">
    <property type="entry name" value="M1_APN"/>
    <property type="match status" value="1"/>
</dbReference>
<dbReference type="FunFam" id="2.60.40.1840:FF:000001">
    <property type="entry name" value="Aminopeptidase N"/>
    <property type="match status" value="1"/>
</dbReference>
<dbReference type="FunFam" id="1.25.50.10:FF:000003">
    <property type="entry name" value="M1 family aminopeptidase"/>
    <property type="match status" value="1"/>
</dbReference>
<dbReference type="FunFam" id="3.30.2010.30:FF:000002">
    <property type="entry name" value="Putative aminopeptidase N"/>
    <property type="match status" value="1"/>
</dbReference>
<dbReference type="Gene3D" id="2.60.40.1840">
    <property type="match status" value="1"/>
</dbReference>
<dbReference type="Gene3D" id="3.30.2010.30">
    <property type="match status" value="1"/>
</dbReference>
<dbReference type="Gene3D" id="1.10.390.10">
    <property type="entry name" value="Neutral Protease Domain 2"/>
    <property type="match status" value="1"/>
</dbReference>
<dbReference type="Gene3D" id="1.25.50.10">
    <property type="entry name" value="Peptidase M1, alanyl aminopeptidase, C-terminal domain"/>
    <property type="match status" value="1"/>
</dbReference>
<dbReference type="Gene3D" id="2.60.40.1730">
    <property type="entry name" value="tricorn interacting facor f3 domain"/>
    <property type="match status" value="1"/>
</dbReference>
<dbReference type="InterPro" id="IPR045357">
    <property type="entry name" value="Aminopeptidase_N-like_N"/>
</dbReference>
<dbReference type="InterPro" id="IPR042097">
    <property type="entry name" value="Aminopeptidase_N-like_N_sf"/>
</dbReference>
<dbReference type="InterPro" id="IPR038438">
    <property type="entry name" value="PepN_Ig-like_sf"/>
</dbReference>
<dbReference type="InterPro" id="IPR001930">
    <property type="entry name" value="Peptidase_M1"/>
</dbReference>
<dbReference type="InterPro" id="IPR014782">
    <property type="entry name" value="Peptidase_M1_dom"/>
</dbReference>
<dbReference type="InterPro" id="IPR012779">
    <property type="entry name" value="Peptidase_M1_pepN"/>
</dbReference>
<dbReference type="InterPro" id="IPR024601">
    <property type="entry name" value="Peptidase_M1_pepN_C"/>
</dbReference>
<dbReference type="InterPro" id="IPR037144">
    <property type="entry name" value="Peptidase_M1_pepN_C_sf"/>
</dbReference>
<dbReference type="InterPro" id="IPR035414">
    <property type="entry name" value="Peptidase_M1_pepN_Ig-like"/>
</dbReference>
<dbReference type="InterPro" id="IPR027268">
    <property type="entry name" value="Peptidase_M4/M1_CTD_sf"/>
</dbReference>
<dbReference type="NCBIfam" id="TIGR02414">
    <property type="entry name" value="pepN_proteo"/>
    <property type="match status" value="1"/>
</dbReference>
<dbReference type="PANTHER" id="PTHR46322">
    <property type="entry name" value="PUROMYCIN-SENSITIVE AMINOPEPTIDASE"/>
    <property type="match status" value="1"/>
</dbReference>
<dbReference type="PANTHER" id="PTHR46322:SF1">
    <property type="entry name" value="PUROMYCIN-SENSITIVE AMINOPEPTIDASE"/>
    <property type="match status" value="1"/>
</dbReference>
<dbReference type="Pfam" id="PF11940">
    <property type="entry name" value="DUF3458"/>
    <property type="match status" value="1"/>
</dbReference>
<dbReference type="Pfam" id="PF17432">
    <property type="entry name" value="DUF3458_C"/>
    <property type="match status" value="1"/>
</dbReference>
<dbReference type="Pfam" id="PF01433">
    <property type="entry name" value="Peptidase_M1"/>
    <property type="match status" value="1"/>
</dbReference>
<dbReference type="Pfam" id="PF17900">
    <property type="entry name" value="Peptidase_M1_N"/>
    <property type="match status" value="1"/>
</dbReference>
<dbReference type="PRINTS" id="PR00756">
    <property type="entry name" value="ALADIPTASE"/>
</dbReference>
<dbReference type="SUPFAM" id="SSF63737">
    <property type="entry name" value="Leukotriene A4 hydrolase N-terminal domain"/>
    <property type="match status" value="1"/>
</dbReference>
<dbReference type="SUPFAM" id="SSF55486">
    <property type="entry name" value="Metalloproteases ('zincins'), catalytic domain"/>
    <property type="match status" value="1"/>
</dbReference>
<dbReference type="PROSITE" id="PS00142">
    <property type="entry name" value="ZINC_PROTEASE"/>
    <property type="match status" value="1"/>
</dbReference>
<evidence type="ECO:0000250" key="1">
    <source>
        <dbReference type="UniProtKB" id="P15144"/>
    </source>
</evidence>
<evidence type="ECO:0000256" key="2">
    <source>
        <dbReference type="SAM" id="MobiDB-lite"/>
    </source>
</evidence>
<evidence type="ECO:0000269" key="3">
    <source>
    </source>
</evidence>
<evidence type="ECO:0000269" key="4">
    <source>
    </source>
</evidence>
<evidence type="ECO:0000269" key="5">
    <source>
    </source>
</evidence>
<evidence type="ECO:0000269" key="6">
    <source>
    </source>
</evidence>
<evidence type="ECO:0000269" key="7">
    <source>
    </source>
</evidence>
<evidence type="ECO:0000269" key="8">
    <source>
    </source>
</evidence>
<evidence type="ECO:0000269" key="9">
    <source>
    </source>
</evidence>
<evidence type="ECO:0000269" key="10">
    <source>
    </source>
</evidence>
<evidence type="ECO:0000269" key="11">
    <source>
    </source>
</evidence>
<evidence type="ECO:0000269" key="12">
    <source>
    </source>
</evidence>
<evidence type="ECO:0000269" key="13">
    <source>
    </source>
</evidence>
<evidence type="ECO:0000269" key="14">
    <source>
    </source>
</evidence>
<evidence type="ECO:0000269" key="15">
    <source>
    </source>
</evidence>
<evidence type="ECO:0000269" key="16">
    <source>
    </source>
</evidence>
<evidence type="ECO:0000269" key="17">
    <source>
    </source>
</evidence>
<evidence type="ECO:0000269" key="18">
    <source>
    </source>
</evidence>
<evidence type="ECO:0000269" key="19">
    <source>
    </source>
</evidence>
<evidence type="ECO:0000269" key="20">
    <source>
    </source>
</evidence>
<evidence type="ECO:0000269" key="21">
    <source>
    </source>
</evidence>
<evidence type="ECO:0000269" key="22">
    <source ref="21"/>
</evidence>
<evidence type="ECO:0000269" key="23">
    <source ref="24"/>
</evidence>
<evidence type="ECO:0000303" key="24">
    <source>
    </source>
</evidence>
<evidence type="ECO:0000303" key="25">
    <source>
    </source>
</evidence>
<evidence type="ECO:0000303" key="26">
    <source>
    </source>
</evidence>
<evidence type="ECO:0000303" key="27">
    <source>
    </source>
</evidence>
<evidence type="ECO:0000303" key="28">
    <source>
    </source>
</evidence>
<evidence type="ECO:0000303" key="29">
    <source>
    </source>
</evidence>
<evidence type="ECO:0000303" key="30">
    <source>
    </source>
</evidence>
<evidence type="ECO:0000305" key="31"/>
<evidence type="ECO:0000305" key="32">
    <source>
    </source>
</evidence>
<evidence type="ECO:0000305" key="33">
    <source>
    </source>
</evidence>
<evidence type="ECO:0000305" key="34">
    <source>
    </source>
</evidence>
<evidence type="ECO:0000312" key="35">
    <source>
        <dbReference type="EMBL" id="CAA70301.2"/>
    </source>
</evidence>
<evidence type="ECO:0000312" key="36">
    <source>
        <dbReference type="EMBL" id="CAD52253.1"/>
    </source>
</evidence>
<evidence type="ECO:0000312" key="37">
    <source>
        <dbReference type="PDB" id="3T8V"/>
    </source>
</evidence>
<evidence type="ECO:0000312" key="38">
    <source>
        <dbReference type="PDB" id="5Y1Q"/>
    </source>
</evidence>
<evidence type="ECO:0000312" key="39">
    <source>
        <dbReference type="Proteomes" id="UP000001450"/>
    </source>
</evidence>
<evidence type="ECO:0007744" key="40">
    <source>
        <dbReference type="PDB" id="3EBG"/>
    </source>
</evidence>
<evidence type="ECO:0007744" key="41">
    <source>
        <dbReference type="PDB" id="3EBH"/>
    </source>
</evidence>
<evidence type="ECO:0007744" key="42">
    <source>
        <dbReference type="PDB" id="3EBI"/>
    </source>
</evidence>
<evidence type="ECO:0007744" key="43">
    <source>
        <dbReference type="PDB" id="3Q43"/>
    </source>
</evidence>
<evidence type="ECO:0007744" key="44">
    <source>
        <dbReference type="PDB" id="3Q44"/>
    </source>
</evidence>
<evidence type="ECO:0007744" key="45">
    <source>
        <dbReference type="PDB" id="3T8V"/>
    </source>
</evidence>
<evidence type="ECO:0007744" key="46">
    <source>
        <dbReference type="PDB" id="4J3B"/>
    </source>
</evidence>
<evidence type="ECO:0007744" key="47">
    <source>
        <dbReference type="PDB" id="4K5L"/>
    </source>
</evidence>
<evidence type="ECO:0007744" key="48">
    <source>
        <dbReference type="PDB" id="4K5M"/>
    </source>
</evidence>
<evidence type="ECO:0007744" key="49">
    <source>
        <dbReference type="PDB" id="4K5N"/>
    </source>
</evidence>
<evidence type="ECO:0007744" key="50">
    <source>
        <dbReference type="PDB" id="4K5O"/>
    </source>
</evidence>
<evidence type="ECO:0007744" key="51">
    <source>
        <dbReference type="PDB" id="4K5P"/>
    </source>
</evidence>
<evidence type="ECO:0007744" key="52">
    <source>
        <dbReference type="PDB" id="4R5T"/>
    </source>
</evidence>
<evidence type="ECO:0007744" key="53">
    <source>
        <dbReference type="PDB" id="4R5V"/>
    </source>
</evidence>
<evidence type="ECO:0007744" key="54">
    <source>
        <dbReference type="PDB" id="4R5X"/>
    </source>
</evidence>
<evidence type="ECO:0007744" key="55">
    <source>
        <dbReference type="PDB" id="4X2U"/>
    </source>
</evidence>
<evidence type="ECO:0007744" key="56">
    <source>
        <dbReference type="PDB" id="4ZQT"/>
    </source>
</evidence>
<evidence type="ECO:0007744" key="57">
    <source>
        <dbReference type="PDB" id="4ZW3"/>
    </source>
</evidence>
<evidence type="ECO:0007744" key="58">
    <source>
        <dbReference type="PDB" id="4ZW5"/>
    </source>
</evidence>
<evidence type="ECO:0007744" key="59">
    <source>
        <dbReference type="PDB" id="4ZW6"/>
    </source>
</evidence>
<evidence type="ECO:0007744" key="60">
    <source>
        <dbReference type="PDB" id="4ZW7"/>
    </source>
</evidence>
<evidence type="ECO:0007744" key="61">
    <source>
        <dbReference type="PDB" id="4ZW8"/>
    </source>
</evidence>
<evidence type="ECO:0007744" key="62">
    <source>
        <dbReference type="PDB" id="4ZX3"/>
    </source>
</evidence>
<evidence type="ECO:0007744" key="63">
    <source>
        <dbReference type="PDB" id="4ZX4"/>
    </source>
</evidence>
<evidence type="ECO:0007744" key="64">
    <source>
        <dbReference type="PDB" id="4ZX5"/>
    </source>
</evidence>
<evidence type="ECO:0007744" key="65">
    <source>
        <dbReference type="PDB" id="4ZX6"/>
    </source>
</evidence>
<evidence type="ECO:0007744" key="66">
    <source>
        <dbReference type="PDB" id="5XM7"/>
    </source>
</evidence>
<evidence type="ECO:0007744" key="67">
    <source>
        <dbReference type="PDB" id="5Y19"/>
    </source>
</evidence>
<evidence type="ECO:0007744" key="68">
    <source>
        <dbReference type="PDB" id="5Y1H"/>
    </source>
</evidence>
<evidence type="ECO:0007744" key="69">
    <source>
        <dbReference type="PDB" id="5Y1K"/>
    </source>
</evidence>
<evidence type="ECO:0007744" key="70">
    <source>
        <dbReference type="PDB" id="5Y1Q"/>
    </source>
</evidence>
<evidence type="ECO:0007744" key="71">
    <source>
        <dbReference type="PDB" id="5Y1R"/>
    </source>
</evidence>
<evidence type="ECO:0007744" key="72">
    <source>
        <dbReference type="PDB" id="5Y1S"/>
    </source>
</evidence>
<evidence type="ECO:0007744" key="73">
    <source>
        <dbReference type="PDB" id="5Y1T"/>
    </source>
</evidence>
<evidence type="ECO:0007744" key="74">
    <source>
        <dbReference type="PDB" id="5Y1V"/>
    </source>
</evidence>
<evidence type="ECO:0007744" key="75">
    <source>
        <dbReference type="PDB" id="5Y1W"/>
    </source>
</evidence>
<evidence type="ECO:0007744" key="76">
    <source>
        <dbReference type="PDB" id="5Y1X"/>
    </source>
</evidence>
<evidence type="ECO:0007744" key="77">
    <source>
        <dbReference type="PDB" id="5Y3I"/>
    </source>
</evidence>
<evidence type="ECO:0007744" key="78">
    <source>
        <dbReference type="PDB" id="6EA1"/>
    </source>
</evidence>
<evidence type="ECO:0007744" key="79">
    <source>
        <dbReference type="PDB" id="6EA2"/>
    </source>
</evidence>
<evidence type="ECO:0007744" key="80">
    <source>
        <dbReference type="PDB" id="6EAA"/>
    </source>
</evidence>
<evidence type="ECO:0007744" key="81">
    <source>
        <dbReference type="PDB" id="6EAB"/>
    </source>
</evidence>
<evidence type="ECO:0007744" key="82">
    <source>
        <dbReference type="PDB" id="6EE3"/>
    </source>
</evidence>
<evidence type="ECO:0007744" key="83">
    <source>
        <dbReference type="PDB" id="6EE4"/>
    </source>
</evidence>
<evidence type="ECO:0007744" key="84">
    <source>
        <dbReference type="PDB" id="6EE6"/>
    </source>
</evidence>
<evidence type="ECO:0007744" key="85">
    <source>
        <dbReference type="PDB" id="6EED"/>
    </source>
</evidence>
<evidence type="ECO:0007744" key="86">
    <source>
        <dbReference type="PDB" id="6SBQ"/>
    </source>
</evidence>
<evidence type="ECO:0007744" key="87">
    <source>
        <dbReference type="PDB" id="6SBR"/>
    </source>
</evidence>
<evidence type="ECO:0007829" key="88">
    <source>
        <dbReference type="PDB" id="6SBQ"/>
    </source>
</evidence>
<accession>O96935</accession>
<accession>Q8IEK1</accession>
<gene>
    <name evidence="29" type="primary">M1AAP</name>
    <name type="ORF">MAL13P1.56</name>
    <name evidence="36" type="ORF">PF3D7_1311800</name>
</gene>
<protein>
    <recommendedName>
        <fullName evidence="25">Aminopeptidase N</fullName>
        <ecNumber evidence="3 4 6 8 10 20 21">3.4.11.-</ecNumber>
    </recommendedName>
    <alternativeName>
        <fullName evidence="26">M1 alanyl aminopeptidase</fullName>
        <shortName evidence="29">PfM1AAP</shortName>
    </alternativeName>
    <alternativeName>
        <fullName evidence="30">M1 family aminopeptidase</fullName>
    </alternativeName>
    <alternativeName>
        <fullName evidence="24">PfA-M1</fullName>
    </alternativeName>
    <component>
        <recommendedName>
            <fullName evidence="24">p120 form</fullName>
        </recommendedName>
    </component>
    <component>
        <recommendedName>
            <fullName evidence="30">p96 form</fullName>
        </recommendedName>
    </component>
    <component>
        <recommendedName>
            <fullName evidence="30">p68 form</fullName>
        </recommendedName>
    </component>
    <component>
        <recommendedName>
            <fullName evidence="28">p35 form</fullName>
        </recommendedName>
    </component>
</protein>
<organism evidence="39">
    <name type="scientific">Plasmodium falciparum (isolate 3D7)</name>
    <dbReference type="NCBI Taxonomy" id="36329"/>
    <lineage>
        <taxon>Eukaryota</taxon>
        <taxon>Sar</taxon>
        <taxon>Alveolata</taxon>
        <taxon>Apicomplexa</taxon>
        <taxon>Aconoidasida</taxon>
        <taxon>Haemosporida</taxon>
        <taxon>Plasmodiidae</taxon>
        <taxon>Plasmodium</taxon>
        <taxon>Plasmodium (Laverania)</taxon>
    </lineage>
</organism>